<organism>
    <name type="scientific">Mus musculus</name>
    <name type="common">Mouse</name>
    <dbReference type="NCBI Taxonomy" id="10090"/>
    <lineage>
        <taxon>Eukaryota</taxon>
        <taxon>Metazoa</taxon>
        <taxon>Chordata</taxon>
        <taxon>Craniata</taxon>
        <taxon>Vertebrata</taxon>
        <taxon>Euteleostomi</taxon>
        <taxon>Mammalia</taxon>
        <taxon>Eutheria</taxon>
        <taxon>Euarchontoglires</taxon>
        <taxon>Glires</taxon>
        <taxon>Rodentia</taxon>
        <taxon>Myomorpha</taxon>
        <taxon>Muroidea</taxon>
        <taxon>Muridae</taxon>
        <taxon>Murinae</taxon>
        <taxon>Mus</taxon>
        <taxon>Mus</taxon>
    </lineage>
</organism>
<accession>Q8JZN7</accession>
<keyword id="KW-0106">Calcium</keyword>
<keyword id="KW-0342">GTP-binding</keyword>
<keyword id="KW-0378">Hydrolase</keyword>
<keyword id="KW-1017">Isopeptide bond</keyword>
<keyword id="KW-0460">Magnesium</keyword>
<keyword id="KW-0472">Membrane</keyword>
<keyword id="KW-0479">Metal-binding</keyword>
<keyword id="KW-0496">Mitochondrion</keyword>
<keyword id="KW-1000">Mitochondrion outer membrane</keyword>
<keyword id="KW-0547">Nucleotide-binding</keyword>
<keyword id="KW-1185">Reference proteome</keyword>
<keyword id="KW-0677">Repeat</keyword>
<keyword id="KW-0812">Transmembrane</keyword>
<keyword id="KW-1133">Transmembrane helix</keyword>
<keyword id="KW-0832">Ubl conjugation</keyword>
<gene>
    <name type="primary">Rhot2</name>
    <name type="synonym">Arht2</name>
</gene>
<name>MIRO2_MOUSE</name>
<dbReference type="EC" id="3.6.5.-" evidence="2"/>
<dbReference type="EMBL" id="AY311390">
    <property type="protein sequence ID" value="AAP78906.1"/>
    <property type="molecule type" value="mRNA"/>
</dbReference>
<dbReference type="EMBL" id="BC029777">
    <property type="protein sequence ID" value="AAH29777.1"/>
    <property type="molecule type" value="mRNA"/>
</dbReference>
<dbReference type="EMBL" id="BC034062">
    <property type="protein sequence ID" value="AAH34062.1"/>
    <property type="molecule type" value="mRNA"/>
</dbReference>
<dbReference type="CCDS" id="CCDS37505.1"/>
<dbReference type="RefSeq" id="NP_666111.1">
    <property type="nucleotide sequence ID" value="NM_145999.3"/>
</dbReference>
<dbReference type="SMR" id="Q8JZN7"/>
<dbReference type="BioGRID" id="229580">
    <property type="interactions" value="2"/>
</dbReference>
<dbReference type="FunCoup" id="Q8JZN7">
    <property type="interactions" value="2666"/>
</dbReference>
<dbReference type="STRING" id="10090.ENSMUSP00000044639"/>
<dbReference type="GlyGen" id="Q8JZN7">
    <property type="glycosylation" value="1 site, 1 O-linked glycan (1 site)"/>
</dbReference>
<dbReference type="iPTMnet" id="Q8JZN7"/>
<dbReference type="PhosphoSitePlus" id="Q8JZN7"/>
<dbReference type="SwissPalm" id="Q8JZN7"/>
<dbReference type="jPOST" id="Q8JZN7"/>
<dbReference type="PaxDb" id="10090-ENSMUSP00000044639"/>
<dbReference type="PeptideAtlas" id="Q8JZN7"/>
<dbReference type="ProteomicsDB" id="252569"/>
<dbReference type="Pumba" id="Q8JZN7"/>
<dbReference type="DNASU" id="214952"/>
<dbReference type="Ensembl" id="ENSMUST00000043897.16">
    <property type="protein sequence ID" value="ENSMUSP00000044639.10"/>
    <property type="gene ID" value="ENSMUSG00000025733.18"/>
</dbReference>
<dbReference type="GeneID" id="214952"/>
<dbReference type="KEGG" id="mmu:214952"/>
<dbReference type="UCSC" id="uc008bch.1">
    <property type="organism name" value="mouse"/>
</dbReference>
<dbReference type="AGR" id="MGI:2384892"/>
<dbReference type="CTD" id="89941"/>
<dbReference type="MGI" id="MGI:2384892">
    <property type="gene designation" value="Rhot2"/>
</dbReference>
<dbReference type="VEuPathDB" id="HostDB:ENSMUSG00000025733"/>
<dbReference type="eggNOG" id="KOG1707">
    <property type="taxonomic scope" value="Eukaryota"/>
</dbReference>
<dbReference type="GeneTree" id="ENSGT00940000158109"/>
<dbReference type="HOGENOM" id="CLU_014255_3_1_1"/>
<dbReference type="InParanoid" id="Q8JZN7"/>
<dbReference type="OMA" id="FWFAQKA"/>
<dbReference type="OrthoDB" id="10020961at2759"/>
<dbReference type="PhylomeDB" id="Q8JZN7"/>
<dbReference type="TreeFam" id="TF300814"/>
<dbReference type="Reactome" id="R-MMU-9013419">
    <property type="pathway name" value="RHOT2 GTPase cycle"/>
</dbReference>
<dbReference type="BioGRID-ORCS" id="214952">
    <property type="hits" value="9 hits in 79 CRISPR screens"/>
</dbReference>
<dbReference type="CD-CODE" id="CE726F99">
    <property type="entry name" value="Postsynaptic density"/>
</dbReference>
<dbReference type="ChiTaRS" id="Rhot2">
    <property type="organism name" value="mouse"/>
</dbReference>
<dbReference type="PRO" id="PR:Q8JZN7"/>
<dbReference type="Proteomes" id="UP000000589">
    <property type="component" value="Chromosome 17"/>
</dbReference>
<dbReference type="RNAct" id="Q8JZN7">
    <property type="molecule type" value="protein"/>
</dbReference>
<dbReference type="Bgee" id="ENSMUSG00000025733">
    <property type="expression patterns" value="Expressed in retinal neural layer and 249 other cell types or tissues"/>
</dbReference>
<dbReference type="ExpressionAtlas" id="Q8JZN7">
    <property type="expression patterns" value="baseline and differential"/>
</dbReference>
<dbReference type="GO" id="GO:0005743">
    <property type="term" value="C:mitochondrial inner membrane"/>
    <property type="evidence" value="ECO:0007005"/>
    <property type="project" value="MGI"/>
</dbReference>
<dbReference type="GO" id="GO:0005741">
    <property type="term" value="C:mitochondrial outer membrane"/>
    <property type="evidence" value="ECO:0000250"/>
    <property type="project" value="UniProtKB"/>
</dbReference>
<dbReference type="GO" id="GO:0005739">
    <property type="term" value="C:mitochondrion"/>
    <property type="evidence" value="ECO:0007005"/>
    <property type="project" value="MGI"/>
</dbReference>
<dbReference type="GO" id="GO:0005509">
    <property type="term" value="F:calcium ion binding"/>
    <property type="evidence" value="ECO:0007669"/>
    <property type="project" value="InterPro"/>
</dbReference>
<dbReference type="GO" id="GO:0005525">
    <property type="term" value="F:GTP binding"/>
    <property type="evidence" value="ECO:0007669"/>
    <property type="project" value="UniProtKB-KW"/>
</dbReference>
<dbReference type="GO" id="GO:0003924">
    <property type="term" value="F:GTPase activity"/>
    <property type="evidence" value="ECO:0007669"/>
    <property type="project" value="InterPro"/>
</dbReference>
<dbReference type="GO" id="GO:0019725">
    <property type="term" value="P:cellular homeostasis"/>
    <property type="evidence" value="ECO:0000250"/>
    <property type="project" value="UniProtKB"/>
</dbReference>
<dbReference type="GO" id="GO:0097345">
    <property type="term" value="P:mitochondrial outer membrane permeabilization"/>
    <property type="evidence" value="ECO:0000250"/>
    <property type="project" value="UniProtKB"/>
</dbReference>
<dbReference type="GO" id="GO:0047497">
    <property type="term" value="P:mitochondrion transport along microtubule"/>
    <property type="evidence" value="ECO:0000250"/>
    <property type="project" value="UniProtKB"/>
</dbReference>
<dbReference type="CDD" id="cd01893">
    <property type="entry name" value="Miro1"/>
    <property type="match status" value="1"/>
</dbReference>
<dbReference type="CDD" id="cd01892">
    <property type="entry name" value="Miro2"/>
    <property type="match status" value="1"/>
</dbReference>
<dbReference type="FunFam" id="1.10.238.10:FF:000011">
    <property type="entry name" value="Mitochondrial Rho GTPase"/>
    <property type="match status" value="1"/>
</dbReference>
<dbReference type="FunFam" id="1.10.238.10:FF:000021">
    <property type="entry name" value="Mitochondrial Rho GTPase"/>
    <property type="match status" value="1"/>
</dbReference>
<dbReference type="FunFam" id="3.40.50.300:FF:000170">
    <property type="entry name" value="Mitochondrial Rho GTPase"/>
    <property type="match status" value="1"/>
</dbReference>
<dbReference type="FunFam" id="3.40.50.300:FF:001117">
    <property type="entry name" value="Mitochondrial Rho GTPase 2"/>
    <property type="match status" value="1"/>
</dbReference>
<dbReference type="Gene3D" id="1.10.238.10">
    <property type="entry name" value="EF-hand"/>
    <property type="match status" value="2"/>
</dbReference>
<dbReference type="Gene3D" id="3.40.50.300">
    <property type="entry name" value="P-loop containing nucleotide triphosphate hydrolases"/>
    <property type="match status" value="2"/>
</dbReference>
<dbReference type="InterPro" id="IPR011992">
    <property type="entry name" value="EF-hand-dom_pair"/>
</dbReference>
<dbReference type="InterPro" id="IPR018247">
    <property type="entry name" value="EF_Hand_1_Ca_BS"/>
</dbReference>
<dbReference type="InterPro" id="IPR013566">
    <property type="entry name" value="EF_hand_assoc_1"/>
</dbReference>
<dbReference type="InterPro" id="IPR013567">
    <property type="entry name" value="EF_hand_assoc_2"/>
</dbReference>
<dbReference type="InterPro" id="IPR002048">
    <property type="entry name" value="EF_hand_dom"/>
</dbReference>
<dbReference type="InterPro" id="IPR021181">
    <property type="entry name" value="Miro"/>
</dbReference>
<dbReference type="InterPro" id="IPR052266">
    <property type="entry name" value="Miro-EF-hand_domain"/>
</dbReference>
<dbReference type="InterPro" id="IPR020860">
    <property type="entry name" value="MIRO_dom"/>
</dbReference>
<dbReference type="InterPro" id="IPR027417">
    <property type="entry name" value="P-loop_NTPase"/>
</dbReference>
<dbReference type="InterPro" id="IPR001806">
    <property type="entry name" value="Small_GTPase"/>
</dbReference>
<dbReference type="PANTHER" id="PTHR46819">
    <property type="entry name" value="EF-HAND CALCIUM-BINDING DOMAIN-CONTAINING PROTEIN 7"/>
    <property type="match status" value="1"/>
</dbReference>
<dbReference type="PANTHER" id="PTHR46819:SF1">
    <property type="entry name" value="EF-HAND CALCIUM-BINDING DOMAIN-CONTAINING PROTEIN 7"/>
    <property type="match status" value="1"/>
</dbReference>
<dbReference type="Pfam" id="PF08355">
    <property type="entry name" value="EF_assoc_1"/>
    <property type="match status" value="1"/>
</dbReference>
<dbReference type="Pfam" id="PF08356">
    <property type="entry name" value="EF_assoc_2"/>
    <property type="match status" value="1"/>
</dbReference>
<dbReference type="Pfam" id="PF00071">
    <property type="entry name" value="Ras"/>
    <property type="match status" value="1"/>
</dbReference>
<dbReference type="PIRSF" id="PIRSF037488">
    <property type="entry name" value="Mt_Rho_GTPase"/>
    <property type="match status" value="1"/>
</dbReference>
<dbReference type="PRINTS" id="PR00449">
    <property type="entry name" value="RASTRNSFRMNG"/>
</dbReference>
<dbReference type="SMART" id="SM00054">
    <property type="entry name" value="EFh"/>
    <property type="match status" value="2"/>
</dbReference>
<dbReference type="SMART" id="SM00175">
    <property type="entry name" value="RAB"/>
    <property type="match status" value="1"/>
</dbReference>
<dbReference type="SMART" id="SM00173">
    <property type="entry name" value="RAS"/>
    <property type="match status" value="1"/>
</dbReference>
<dbReference type="SMART" id="SM00174">
    <property type="entry name" value="RHO"/>
    <property type="match status" value="1"/>
</dbReference>
<dbReference type="SUPFAM" id="SSF47473">
    <property type="entry name" value="EF-hand"/>
    <property type="match status" value="1"/>
</dbReference>
<dbReference type="SUPFAM" id="SSF52540">
    <property type="entry name" value="P-loop containing nucleoside triphosphate hydrolases"/>
    <property type="match status" value="2"/>
</dbReference>
<dbReference type="PROSITE" id="PS00018">
    <property type="entry name" value="EF_HAND_1"/>
    <property type="match status" value="1"/>
</dbReference>
<dbReference type="PROSITE" id="PS50222">
    <property type="entry name" value="EF_HAND_2"/>
    <property type="match status" value="2"/>
</dbReference>
<dbReference type="PROSITE" id="PS51423">
    <property type="entry name" value="MIRO"/>
    <property type="match status" value="2"/>
</dbReference>
<sequence length="620" mass="69071">MRRDVRILLLGEAQVGKTSLILSLVGEEFPEEVPARAEEITIPADVTPEKVPTHIVDYSEAEQTEEELQEEIHKANVVCVVYDVSEETTIEKIRTKWIPLVNGRTATGPRLPIILVGNKSDLRPGSTMEAVLPIMSQFPEIETCVECSAKHLRNISELFYYAQKAVLHPTAPLYDPEAKQLRPACAQALTRIFRLSDQDRDHGLSDEELNAFQKSCFGHPLAPQALEDVKRVVCKNVSGGVQNDRLTLEGFLFLNTLFIQRGRHETTWTILRRFGYSDSLELTPDYLYPALHVPPGCSTELNHRGYQFVQRMFEKHDQDHDGVLSPTELQNLFSVFSGAPWGPELLHTVPTQAGCLPLHGYLCQWTLMTYLDVQQCLAHLGYLGYPTLCEQDSQAQAITVTREKKLDQEKGQTQRSVLMCKVLGARGVGKSAFLQAFLGNSLGEARDPPEKFPLHTINTVRVNGQEKYLILCEVNADSLLDTSLDTTCDVACLMFDSSDPKTFVHCATIYKRYYMDGQTPCLFIASKADLPEGVAPPGLSPAEFCRRHRLPAPASFSCLGPAMPSTDVFTQLATMATFPHLVHTELHPTSFWLRGVLVAVGTAVAAVLSFSLYRVLVKSR</sequence>
<reference key="1">
    <citation type="journal article" date="2004" name="Cytogenet. Genome Res.">
        <title>Cloning and characterization of the mouse Arht2 gene which encodes a putative atypical GTPase.</title>
        <authorList>
            <person name="Shan Y."/>
            <person name="Hexige S."/>
            <person name="Guo Z."/>
            <person name="Wan B."/>
            <person name="Chen K."/>
            <person name="Chen X."/>
            <person name="Ma L."/>
            <person name="Huang C."/>
            <person name="Zhao S."/>
            <person name="Yu L."/>
        </authorList>
    </citation>
    <scope>NUCLEOTIDE SEQUENCE [MRNA]</scope>
    <scope>TISSUE SPECIFICITY</scope>
    <source>
        <strain>C57BL/6J</strain>
    </source>
</reference>
<reference key="2">
    <citation type="journal article" date="2004" name="Genome Res.">
        <title>The status, quality, and expansion of the NIH full-length cDNA project: the Mammalian Gene Collection (MGC).</title>
        <authorList>
            <consortium name="The MGC Project Team"/>
        </authorList>
    </citation>
    <scope>NUCLEOTIDE SEQUENCE [LARGE SCALE MRNA]</scope>
    <source>
        <strain>FVB/N</strain>
        <tissue>Colon</tissue>
        <tissue>Mammary tumor</tissue>
    </source>
</reference>
<reference key="3">
    <citation type="journal article" date="2010" name="Cell">
        <title>A tissue-specific atlas of mouse protein phosphorylation and expression.</title>
        <authorList>
            <person name="Huttlin E.L."/>
            <person name="Jedrychowski M.P."/>
            <person name="Elias J.E."/>
            <person name="Goswami T."/>
            <person name="Rad R."/>
            <person name="Beausoleil S.A."/>
            <person name="Villen J."/>
            <person name="Haas W."/>
            <person name="Sowa M.E."/>
            <person name="Gygi S.P."/>
        </authorList>
    </citation>
    <scope>IDENTIFICATION BY MASS SPECTROMETRY [LARGE SCALE ANALYSIS]</scope>
    <source>
        <tissue>Brain</tissue>
        <tissue>Brown adipose tissue</tissue>
        <tissue>Heart</tissue>
        <tissue>Kidney</tissue>
        <tissue>Liver</tissue>
        <tissue>Lung</tissue>
        <tissue>Pancreas</tissue>
        <tissue>Spleen</tissue>
        <tissue>Testis</tissue>
    </source>
</reference>
<reference key="4">
    <citation type="journal article" date="2012" name="Nat. Commun.">
        <title>The eutherian Armcx genes regulate mitochondrial trafficking in neurons and interact with Miro and Trak2.</title>
        <authorList>
            <person name="Lopez-Domenech G."/>
            <person name="Serrat R."/>
            <person name="Mirra S."/>
            <person name="D'Aniello S."/>
            <person name="Somorjai I."/>
            <person name="Abad A."/>
            <person name="Vitureira N."/>
            <person name="Garcia-Arumi E."/>
            <person name="Alonso M.T."/>
            <person name="Rodriguez-Prados M."/>
            <person name="Burgaya F."/>
            <person name="Andreu A.L."/>
            <person name="Garcia-Sancho J."/>
            <person name="Trullas R."/>
            <person name="Garcia-Fernandez J."/>
            <person name="Soriano E."/>
        </authorList>
    </citation>
    <scope>INTERACTION WITH ARMCX3</scope>
</reference>
<protein>
    <recommendedName>
        <fullName>Mitochondrial Rho GTPase 2</fullName>
        <shortName>MIRO-2</shortName>
        <ecNumber evidence="2">3.6.5.-</ecNumber>
    </recommendedName>
    <alternativeName>
        <fullName>Ras homolog gene family member T2</fullName>
    </alternativeName>
</protein>
<evidence type="ECO:0000250" key="1">
    <source>
        <dbReference type="UniProtKB" id="Q8IXI1"/>
    </source>
</evidence>
<evidence type="ECO:0000250" key="2">
    <source>
        <dbReference type="UniProtKB" id="Q8IXI2"/>
    </source>
</evidence>
<evidence type="ECO:0000255" key="3"/>
<evidence type="ECO:0000255" key="4">
    <source>
        <dbReference type="PROSITE-ProRule" id="PRU00448"/>
    </source>
</evidence>
<evidence type="ECO:0000255" key="5">
    <source>
        <dbReference type="PROSITE-ProRule" id="PRU00757"/>
    </source>
</evidence>
<evidence type="ECO:0000269" key="6">
    <source>
    </source>
</evidence>
<evidence type="ECO:0000269" key="7">
    <source>
    </source>
</evidence>
<evidence type="ECO:0000305" key="8"/>
<feature type="chain" id="PRO_0000239319" description="Mitochondrial Rho GTPase 2">
    <location>
        <begin position="1"/>
        <end position="620"/>
    </location>
</feature>
<feature type="topological domain" description="Cytoplasmic" evidence="3">
    <location>
        <begin position="1"/>
        <end position="594"/>
    </location>
</feature>
<feature type="transmembrane region" description="Helical; Anchor for type IV membrane protein" evidence="3">
    <location>
        <begin position="595"/>
        <end position="617"/>
    </location>
</feature>
<feature type="topological domain" description="Mitochondrial intermembrane" evidence="3">
    <location>
        <begin position="618"/>
        <end position="620"/>
    </location>
</feature>
<feature type="domain" description="Miro 1" evidence="5">
    <location>
        <begin position="2"/>
        <end position="168"/>
    </location>
</feature>
<feature type="domain" description="EF-hand 1" evidence="4">
    <location>
        <begin position="184"/>
        <end position="219"/>
    </location>
</feature>
<feature type="domain" description="EF-hand 2" evidence="4">
    <location>
        <begin position="304"/>
        <end position="339"/>
    </location>
</feature>
<feature type="domain" description="Miro 2" evidence="5">
    <location>
        <begin position="415"/>
        <end position="578"/>
    </location>
</feature>
<feature type="binding site" evidence="2">
    <location>
        <position position="16"/>
    </location>
    <ligand>
        <name>GTP</name>
        <dbReference type="ChEBI" id="CHEBI:37565"/>
        <label>1</label>
    </ligand>
</feature>
<feature type="binding site" evidence="2">
    <location>
        <position position="17"/>
    </location>
    <ligand>
        <name>GTP</name>
        <dbReference type="ChEBI" id="CHEBI:37565"/>
        <label>1</label>
    </ligand>
</feature>
<feature type="binding site" evidence="2">
    <location>
        <position position="18"/>
    </location>
    <ligand>
        <name>GTP</name>
        <dbReference type="ChEBI" id="CHEBI:37565"/>
        <label>1</label>
    </ligand>
</feature>
<feature type="binding site" evidence="2">
    <location>
        <position position="18"/>
    </location>
    <ligand>
        <name>Mg(2+)</name>
        <dbReference type="ChEBI" id="CHEBI:18420"/>
        <label>1</label>
    </ligand>
</feature>
<feature type="binding site" evidence="2">
    <location>
        <position position="19"/>
    </location>
    <ligand>
        <name>GTP</name>
        <dbReference type="ChEBI" id="CHEBI:37565"/>
        <label>1</label>
    </ligand>
</feature>
<feature type="binding site" evidence="2">
    <location>
        <position position="57"/>
    </location>
    <ligand>
        <name>Mg(2+)</name>
        <dbReference type="ChEBI" id="CHEBI:18420"/>
        <label>1</label>
    </ligand>
</feature>
<feature type="binding site" evidence="2">
    <location>
        <position position="59"/>
    </location>
    <ligand>
        <name>GTP</name>
        <dbReference type="ChEBI" id="CHEBI:37565"/>
        <label>1</label>
    </ligand>
</feature>
<feature type="binding site" evidence="2">
    <location>
        <position position="118"/>
    </location>
    <ligand>
        <name>GTP</name>
        <dbReference type="ChEBI" id="CHEBI:37565"/>
        <label>1</label>
    </ligand>
</feature>
<feature type="binding site" evidence="2">
    <location>
        <position position="119"/>
    </location>
    <ligand>
        <name>GTP</name>
        <dbReference type="ChEBI" id="CHEBI:37565"/>
        <label>1</label>
    </ligand>
</feature>
<feature type="binding site" evidence="2">
    <location>
        <position position="121"/>
    </location>
    <ligand>
        <name>GTP</name>
        <dbReference type="ChEBI" id="CHEBI:37565"/>
        <label>1</label>
    </ligand>
</feature>
<feature type="binding site" evidence="2">
    <location>
        <position position="149"/>
    </location>
    <ligand>
        <name>GTP</name>
        <dbReference type="ChEBI" id="CHEBI:37565"/>
        <label>1</label>
    </ligand>
</feature>
<feature type="binding site" evidence="2">
    <location>
        <position position="150"/>
    </location>
    <ligand>
        <name>GTP</name>
        <dbReference type="ChEBI" id="CHEBI:37565"/>
        <label>1</label>
    </ligand>
</feature>
<feature type="binding site" evidence="8">
    <location>
        <position position="197"/>
    </location>
    <ligand>
        <name>Ca(2+)</name>
        <dbReference type="ChEBI" id="CHEBI:29108"/>
        <label>1</label>
    </ligand>
</feature>
<feature type="binding site" evidence="8">
    <location>
        <position position="199"/>
    </location>
    <ligand>
        <name>Ca(2+)</name>
        <dbReference type="ChEBI" id="CHEBI:29108"/>
        <label>1</label>
    </ligand>
</feature>
<feature type="binding site" evidence="8">
    <location>
        <position position="201"/>
    </location>
    <ligand>
        <name>Ca(2+)</name>
        <dbReference type="ChEBI" id="CHEBI:29108"/>
        <label>1</label>
    </ligand>
</feature>
<feature type="binding site" evidence="8">
    <location>
        <position position="208"/>
    </location>
    <ligand>
        <name>Ca(2+)</name>
        <dbReference type="ChEBI" id="CHEBI:29108"/>
        <label>1</label>
    </ligand>
</feature>
<feature type="binding site" evidence="4">
    <location>
        <position position="317"/>
    </location>
    <ligand>
        <name>Ca(2+)</name>
        <dbReference type="ChEBI" id="CHEBI:29108"/>
        <label>2</label>
    </ligand>
</feature>
<feature type="binding site" evidence="4">
    <location>
        <position position="319"/>
    </location>
    <ligand>
        <name>Ca(2+)</name>
        <dbReference type="ChEBI" id="CHEBI:29108"/>
        <label>2</label>
    </ligand>
</feature>
<feature type="binding site" evidence="4">
    <location>
        <position position="321"/>
    </location>
    <ligand>
        <name>Ca(2+)</name>
        <dbReference type="ChEBI" id="CHEBI:29108"/>
        <label>2</label>
    </ligand>
</feature>
<feature type="binding site" evidence="4">
    <location>
        <position position="328"/>
    </location>
    <ligand>
        <name>Ca(2+)</name>
        <dbReference type="ChEBI" id="CHEBI:29108"/>
        <label>2</label>
    </ligand>
</feature>
<feature type="binding site" evidence="1">
    <location>
        <position position="427"/>
    </location>
    <ligand>
        <name>GTP</name>
        <dbReference type="ChEBI" id="CHEBI:37565"/>
        <label>2</label>
    </ligand>
</feature>
<feature type="binding site" evidence="1">
    <location>
        <position position="429"/>
    </location>
    <ligand>
        <name>GTP</name>
        <dbReference type="ChEBI" id="CHEBI:37565"/>
        <label>2</label>
    </ligand>
</feature>
<feature type="binding site" evidence="1">
    <location>
        <position position="430"/>
    </location>
    <ligand>
        <name>GTP</name>
        <dbReference type="ChEBI" id="CHEBI:37565"/>
        <label>2</label>
    </ligand>
</feature>
<feature type="binding site" evidence="1">
    <location>
        <position position="431"/>
    </location>
    <ligand>
        <name>GTP</name>
        <dbReference type="ChEBI" id="CHEBI:37565"/>
        <label>2</label>
    </ligand>
</feature>
<feature type="binding site" evidence="1">
    <location>
        <position position="431"/>
    </location>
    <ligand>
        <name>Mg(2+)</name>
        <dbReference type="ChEBI" id="CHEBI:18420"/>
        <label>2</label>
    </ligand>
</feature>
<feature type="binding site" evidence="1">
    <location>
        <position position="432"/>
    </location>
    <ligand>
        <name>GTP</name>
        <dbReference type="ChEBI" id="CHEBI:37565"/>
        <label>2</label>
    </ligand>
</feature>
<feature type="binding site" evidence="1">
    <location>
        <position position="473"/>
    </location>
    <ligand>
        <name>Mg(2+)</name>
        <dbReference type="ChEBI" id="CHEBI:18420"/>
        <label>2</label>
    </ligand>
</feature>
<feature type="binding site" evidence="1">
    <location>
        <position position="527"/>
    </location>
    <ligand>
        <name>GTP</name>
        <dbReference type="ChEBI" id="CHEBI:37565"/>
        <label>2</label>
    </ligand>
</feature>
<feature type="binding site" evidence="1">
    <location>
        <position position="529"/>
    </location>
    <ligand>
        <name>GTP</name>
        <dbReference type="ChEBI" id="CHEBI:37565"/>
        <label>2</label>
    </ligand>
</feature>
<feature type="binding site" evidence="1">
    <location>
        <position position="558"/>
    </location>
    <ligand>
        <name>GTP</name>
        <dbReference type="ChEBI" id="CHEBI:37565"/>
        <label>2</label>
    </ligand>
</feature>
<feature type="cross-link" description="Glycyl lysine isopeptide (Lys-Gly) (interchain with G-Cter in ubiquitin)" evidence="1">
    <location>
        <position position="96"/>
    </location>
</feature>
<feature type="cross-link" description="Glycyl lysine isopeptide (Lys-Gly) (interchain with G-Cter in ubiquitin)" evidence="1">
    <location>
        <position position="119"/>
    </location>
</feature>
<feature type="cross-link" description="Glycyl lysine isopeptide (Lys-Gly) (interchain with G-Cter in ubiquitin)" evidence="1">
    <location>
        <position position="164"/>
    </location>
</feature>
<comment type="function">
    <text evidence="1 2">Atypical mitochondrial nucleoside-triphosphatase (NTPase) involved in mitochondrial trafficking. Probably involved in control of anterograde transport of mitochondria and their subcellular distribution. Can hydrolyze GTP, ATP and UTP (By similarity).</text>
</comment>
<comment type="catalytic activity">
    <reaction evidence="2">
        <text>GTP + H2O = GDP + phosphate + H(+)</text>
        <dbReference type="Rhea" id="RHEA:19669"/>
        <dbReference type="ChEBI" id="CHEBI:15377"/>
        <dbReference type="ChEBI" id="CHEBI:15378"/>
        <dbReference type="ChEBI" id="CHEBI:37565"/>
        <dbReference type="ChEBI" id="CHEBI:43474"/>
        <dbReference type="ChEBI" id="CHEBI:58189"/>
    </reaction>
    <physiologicalReaction direction="left-to-right" evidence="2">
        <dbReference type="Rhea" id="RHEA:19670"/>
    </physiologicalReaction>
</comment>
<comment type="catalytic activity">
    <reaction evidence="1">
        <text>ATP + H2O = ADP + phosphate + H(+)</text>
        <dbReference type="Rhea" id="RHEA:13065"/>
        <dbReference type="ChEBI" id="CHEBI:15377"/>
        <dbReference type="ChEBI" id="CHEBI:15378"/>
        <dbReference type="ChEBI" id="CHEBI:30616"/>
        <dbReference type="ChEBI" id="CHEBI:43474"/>
        <dbReference type="ChEBI" id="CHEBI:456216"/>
    </reaction>
    <physiologicalReaction direction="left-to-right" evidence="1">
        <dbReference type="Rhea" id="RHEA:13066"/>
    </physiologicalReaction>
</comment>
<comment type="catalytic activity">
    <reaction evidence="1">
        <text>UTP + H2O = UDP + phosphate + H(+)</text>
        <dbReference type="Rhea" id="RHEA:64900"/>
        <dbReference type="ChEBI" id="CHEBI:15377"/>
        <dbReference type="ChEBI" id="CHEBI:15378"/>
        <dbReference type="ChEBI" id="CHEBI:43474"/>
        <dbReference type="ChEBI" id="CHEBI:46398"/>
        <dbReference type="ChEBI" id="CHEBI:58223"/>
    </reaction>
    <physiologicalReaction direction="left-to-right" evidence="1">
        <dbReference type="Rhea" id="RHEA:64901"/>
    </physiologicalReaction>
</comment>
<comment type="subunit">
    <text evidence="1 7">Homodimer (By similarity). Interacts with the kinesin-binding proteins TRAK1/OIP106 and TRAK2/GRIF1, forming a link between mitochondria and the trafficking apparatus of the microtubules (By similarity). Interacts with ARMCX3 (PubMed:22569362). Found in a complex with KIF5B, OGT, RHOT1 and TRAK1 (By similarity).</text>
</comment>
<comment type="subcellular location">
    <subcellularLocation>
        <location evidence="1">Mitochondrion outer membrane</location>
        <topology evidence="1">Single-pass type IV membrane protein</topology>
    </subcellularLocation>
    <text evidence="1">Colocalizes with MGARP and RHOT2 at the mitochondria.</text>
</comment>
<comment type="tissue specificity">
    <text evidence="6">Ubiquitously expressed.</text>
</comment>
<comment type="domain">
    <text evidence="1">The Miro 2 domain is necessary for efficient ubiquitination by PRKN.</text>
</comment>
<comment type="PTM">
    <text evidence="1">Ubiquitinated by PRKN in a PINK1-dependent manner, leading to its degradation.</text>
</comment>
<comment type="similarity">
    <text evidence="5 8">Belongs to the mitochondrial Rho GTPase family.</text>
</comment>
<proteinExistence type="evidence at protein level"/>